<accession>A0KEH8</accession>
<protein>
    <recommendedName>
        <fullName evidence="1">Thiosulfate sulfurtransferase GlpE</fullName>
        <ecNumber evidence="1">2.8.1.1</ecNumber>
    </recommendedName>
</protein>
<organism>
    <name type="scientific">Aeromonas hydrophila subsp. hydrophila (strain ATCC 7966 / DSM 30187 / BCRC 13018 / CCUG 14551 / JCM 1027 / KCTC 2358 / NCIMB 9240 / NCTC 8049)</name>
    <dbReference type="NCBI Taxonomy" id="380703"/>
    <lineage>
        <taxon>Bacteria</taxon>
        <taxon>Pseudomonadati</taxon>
        <taxon>Pseudomonadota</taxon>
        <taxon>Gammaproteobacteria</taxon>
        <taxon>Aeromonadales</taxon>
        <taxon>Aeromonadaceae</taxon>
        <taxon>Aeromonas</taxon>
    </lineage>
</organism>
<keyword id="KW-0963">Cytoplasm</keyword>
<keyword id="KW-1185">Reference proteome</keyword>
<keyword id="KW-0808">Transferase</keyword>
<reference key="1">
    <citation type="journal article" date="2006" name="J. Bacteriol.">
        <title>Genome sequence of Aeromonas hydrophila ATCC 7966T: jack of all trades.</title>
        <authorList>
            <person name="Seshadri R."/>
            <person name="Joseph S.W."/>
            <person name="Chopra A.K."/>
            <person name="Sha J."/>
            <person name="Shaw J."/>
            <person name="Graf J."/>
            <person name="Haft D.H."/>
            <person name="Wu M."/>
            <person name="Ren Q."/>
            <person name="Rosovitz M.J."/>
            <person name="Madupu R."/>
            <person name="Tallon L."/>
            <person name="Kim M."/>
            <person name="Jin S."/>
            <person name="Vuong H."/>
            <person name="Stine O.C."/>
            <person name="Ali A."/>
            <person name="Horneman A.J."/>
            <person name="Heidelberg J.F."/>
        </authorList>
    </citation>
    <scope>NUCLEOTIDE SEQUENCE [LARGE SCALE GENOMIC DNA]</scope>
    <source>
        <strain>ATCC 7966 / DSM 30187 / BCRC 13018 / CCUG 14551 / JCM 1027 / KCTC 2358 / NCIMB 9240 / NCTC 8049</strain>
    </source>
</reference>
<name>GLPE_AERHH</name>
<sequence>MDQFAHISAHDAHQKLAAGAARLVDIRDPQSFETAHAVGAFHLTNGTLVRFMNEVDFDTPVIVMCYHGNSSQGAAQYLLQQGYDEVYSLDGGFEAWRREFPIQAGDA</sequence>
<comment type="function">
    <text evidence="1">Transferase that catalyzes the transfer of sulfur from thiosulfate to thiophilic acceptors such as cyanide or dithiols. May function in a CysM-independent thiosulfate assimilation pathway by catalyzing the conversion of thiosulfate to sulfite, which can then be used for L-cysteine biosynthesis.</text>
</comment>
<comment type="catalytic activity">
    <reaction evidence="1">
        <text>thiosulfate + hydrogen cyanide = thiocyanate + sulfite + 2 H(+)</text>
        <dbReference type="Rhea" id="RHEA:16881"/>
        <dbReference type="ChEBI" id="CHEBI:15378"/>
        <dbReference type="ChEBI" id="CHEBI:17359"/>
        <dbReference type="ChEBI" id="CHEBI:18022"/>
        <dbReference type="ChEBI" id="CHEBI:18407"/>
        <dbReference type="ChEBI" id="CHEBI:33542"/>
        <dbReference type="EC" id="2.8.1.1"/>
    </reaction>
</comment>
<comment type="catalytic activity">
    <reaction evidence="1">
        <text>thiosulfate + [thioredoxin]-dithiol = [thioredoxin]-disulfide + hydrogen sulfide + sulfite + 2 H(+)</text>
        <dbReference type="Rhea" id="RHEA:83859"/>
        <dbReference type="Rhea" id="RHEA-COMP:10698"/>
        <dbReference type="Rhea" id="RHEA-COMP:10700"/>
        <dbReference type="ChEBI" id="CHEBI:15378"/>
        <dbReference type="ChEBI" id="CHEBI:17359"/>
        <dbReference type="ChEBI" id="CHEBI:29919"/>
        <dbReference type="ChEBI" id="CHEBI:29950"/>
        <dbReference type="ChEBI" id="CHEBI:33542"/>
        <dbReference type="ChEBI" id="CHEBI:50058"/>
    </reaction>
</comment>
<comment type="subcellular location">
    <subcellularLocation>
        <location evidence="1">Cytoplasm</location>
    </subcellularLocation>
</comment>
<comment type="similarity">
    <text evidence="1">Belongs to the GlpE family.</text>
</comment>
<gene>
    <name evidence="1" type="primary">glpE</name>
    <name type="ordered locus">AHA_0106</name>
</gene>
<dbReference type="EC" id="2.8.1.1" evidence="1"/>
<dbReference type="EMBL" id="CP000462">
    <property type="protein sequence ID" value="ABK36237.1"/>
    <property type="molecule type" value="Genomic_DNA"/>
</dbReference>
<dbReference type="RefSeq" id="WP_011704135.1">
    <property type="nucleotide sequence ID" value="NC_008570.1"/>
</dbReference>
<dbReference type="RefSeq" id="YP_854635.1">
    <property type="nucleotide sequence ID" value="NC_008570.1"/>
</dbReference>
<dbReference type="SMR" id="A0KEH8"/>
<dbReference type="STRING" id="380703.AHA_0106"/>
<dbReference type="EnsemblBacteria" id="ABK36237">
    <property type="protein sequence ID" value="ABK36237"/>
    <property type="gene ID" value="AHA_0106"/>
</dbReference>
<dbReference type="GeneID" id="4489146"/>
<dbReference type="KEGG" id="aha:AHA_0106"/>
<dbReference type="PATRIC" id="fig|380703.7.peg.98"/>
<dbReference type="eggNOG" id="COG0607">
    <property type="taxonomic scope" value="Bacteria"/>
</dbReference>
<dbReference type="HOGENOM" id="CLU_089574_14_0_6"/>
<dbReference type="OrthoDB" id="9811849at2"/>
<dbReference type="Proteomes" id="UP000000756">
    <property type="component" value="Chromosome"/>
</dbReference>
<dbReference type="GO" id="GO:0005737">
    <property type="term" value="C:cytoplasm"/>
    <property type="evidence" value="ECO:0007669"/>
    <property type="project" value="UniProtKB-SubCell"/>
</dbReference>
<dbReference type="GO" id="GO:0004792">
    <property type="term" value="F:thiosulfate-cyanide sulfurtransferase activity"/>
    <property type="evidence" value="ECO:0007669"/>
    <property type="project" value="UniProtKB-UniRule"/>
</dbReference>
<dbReference type="GO" id="GO:0006071">
    <property type="term" value="P:glycerol metabolic process"/>
    <property type="evidence" value="ECO:0007669"/>
    <property type="project" value="UniProtKB-UniRule"/>
</dbReference>
<dbReference type="CDD" id="cd01444">
    <property type="entry name" value="GlpE_ST"/>
    <property type="match status" value="1"/>
</dbReference>
<dbReference type="Gene3D" id="3.40.250.10">
    <property type="entry name" value="Rhodanese-like domain"/>
    <property type="match status" value="1"/>
</dbReference>
<dbReference type="HAMAP" id="MF_01009">
    <property type="entry name" value="Thiosulf_sulfurtr"/>
    <property type="match status" value="1"/>
</dbReference>
<dbReference type="InterPro" id="IPR050229">
    <property type="entry name" value="GlpE_sulfurtransferase"/>
</dbReference>
<dbReference type="InterPro" id="IPR001763">
    <property type="entry name" value="Rhodanese-like_dom"/>
</dbReference>
<dbReference type="InterPro" id="IPR036873">
    <property type="entry name" value="Rhodanese-like_dom_sf"/>
</dbReference>
<dbReference type="InterPro" id="IPR023695">
    <property type="entry name" value="Thiosulf_sulfurTrfase"/>
</dbReference>
<dbReference type="NCBIfam" id="NF001195">
    <property type="entry name" value="PRK00162.1"/>
    <property type="match status" value="1"/>
</dbReference>
<dbReference type="PANTHER" id="PTHR43031">
    <property type="entry name" value="FAD-DEPENDENT OXIDOREDUCTASE"/>
    <property type="match status" value="1"/>
</dbReference>
<dbReference type="PANTHER" id="PTHR43031:SF6">
    <property type="entry name" value="THIOSULFATE SULFURTRANSFERASE GLPE"/>
    <property type="match status" value="1"/>
</dbReference>
<dbReference type="Pfam" id="PF00581">
    <property type="entry name" value="Rhodanese"/>
    <property type="match status" value="1"/>
</dbReference>
<dbReference type="SMART" id="SM00450">
    <property type="entry name" value="RHOD"/>
    <property type="match status" value="1"/>
</dbReference>
<dbReference type="SUPFAM" id="SSF52821">
    <property type="entry name" value="Rhodanese/Cell cycle control phosphatase"/>
    <property type="match status" value="1"/>
</dbReference>
<dbReference type="PROSITE" id="PS50206">
    <property type="entry name" value="RHODANESE_3"/>
    <property type="match status" value="1"/>
</dbReference>
<feature type="chain" id="PRO_1000062954" description="Thiosulfate sulfurtransferase GlpE">
    <location>
        <begin position="1"/>
        <end position="107"/>
    </location>
</feature>
<feature type="domain" description="Rhodanese" evidence="1">
    <location>
        <begin position="17"/>
        <end position="101"/>
    </location>
</feature>
<feature type="active site" description="Cysteine persulfide intermediate" evidence="1">
    <location>
        <position position="65"/>
    </location>
</feature>
<proteinExistence type="inferred from homology"/>
<evidence type="ECO:0000255" key="1">
    <source>
        <dbReference type="HAMAP-Rule" id="MF_01009"/>
    </source>
</evidence>